<evidence type="ECO:0000255" key="1">
    <source>
        <dbReference type="HAMAP-Rule" id="MF_00191"/>
    </source>
</evidence>
<organism>
    <name type="scientific">Prochlorococcus marinus (strain AS9601)</name>
    <dbReference type="NCBI Taxonomy" id="146891"/>
    <lineage>
        <taxon>Bacteria</taxon>
        <taxon>Bacillati</taxon>
        <taxon>Cyanobacteriota</taxon>
        <taxon>Cyanophyceae</taxon>
        <taxon>Synechococcales</taxon>
        <taxon>Prochlorococcaceae</taxon>
        <taxon>Prochlorococcus</taxon>
    </lineage>
</organism>
<gene>
    <name evidence="1" type="primary">ispH</name>
    <name type="ordered locus">A9601_02861</name>
</gene>
<accession>A2BP63</accession>
<sequence length="398" mass="44964">MDTQAFRRSLHHSDRYNRRGFDSPTKRAQALEEAYQSDLISSIRDNGFTYTKGRLNIKLAQAFGFCWGVERAVAMAYETRRHYPNENIWITNEIIHNPSVNDHLRKMNVKFISAKNGIKDFSLVSNGDVVILPAFGATVQEMKLLHEKGCHIIDTTCPWVSKVWHTVEKHKKHVFTSIIHGKFKHEETLATSSFAGKYLVVLDLEEANYVSEYILGKGNRNEFMNKFSKAFSNGFDPDKDLDRVGVANQTTMLKSETEEIGKVFERTMLKKFGPENLNSHFLAFNTICDATEERQDAMFSLVDEDLDILVVIGGFNSSNTTHLQEIAITKNISSFHIDTPERISVKENSIFHKPLGSELELKKNFLPSGKINVGITSGASTPDKVVADVIEKLIDIAS</sequence>
<dbReference type="EC" id="1.17.7.4" evidence="1"/>
<dbReference type="EMBL" id="CP000551">
    <property type="protein sequence ID" value="ABM69574.1"/>
    <property type="molecule type" value="Genomic_DNA"/>
</dbReference>
<dbReference type="RefSeq" id="WP_011817756.1">
    <property type="nucleotide sequence ID" value="NC_008816.1"/>
</dbReference>
<dbReference type="SMR" id="A2BP63"/>
<dbReference type="STRING" id="146891.A9601_02861"/>
<dbReference type="KEGG" id="pmb:A9601_02861"/>
<dbReference type="eggNOG" id="COG0761">
    <property type="taxonomic scope" value="Bacteria"/>
</dbReference>
<dbReference type="HOGENOM" id="CLU_027486_4_0_3"/>
<dbReference type="OrthoDB" id="9804077at2"/>
<dbReference type="UniPathway" id="UPA00056">
    <property type="reaction ID" value="UER00097"/>
</dbReference>
<dbReference type="UniPathway" id="UPA00059">
    <property type="reaction ID" value="UER00105"/>
</dbReference>
<dbReference type="Proteomes" id="UP000002590">
    <property type="component" value="Chromosome"/>
</dbReference>
<dbReference type="GO" id="GO:0051539">
    <property type="term" value="F:4 iron, 4 sulfur cluster binding"/>
    <property type="evidence" value="ECO:0007669"/>
    <property type="project" value="UniProtKB-UniRule"/>
</dbReference>
<dbReference type="GO" id="GO:0051745">
    <property type="term" value="F:4-hydroxy-3-methylbut-2-enyl diphosphate reductase activity"/>
    <property type="evidence" value="ECO:0007669"/>
    <property type="project" value="UniProtKB-UniRule"/>
</dbReference>
<dbReference type="GO" id="GO:0046872">
    <property type="term" value="F:metal ion binding"/>
    <property type="evidence" value="ECO:0007669"/>
    <property type="project" value="UniProtKB-KW"/>
</dbReference>
<dbReference type="GO" id="GO:0050992">
    <property type="term" value="P:dimethylallyl diphosphate biosynthetic process"/>
    <property type="evidence" value="ECO:0007669"/>
    <property type="project" value="UniProtKB-UniRule"/>
</dbReference>
<dbReference type="GO" id="GO:0019288">
    <property type="term" value="P:isopentenyl diphosphate biosynthetic process, methylerythritol 4-phosphate pathway"/>
    <property type="evidence" value="ECO:0007669"/>
    <property type="project" value="UniProtKB-UniRule"/>
</dbReference>
<dbReference type="GO" id="GO:0016114">
    <property type="term" value="P:terpenoid biosynthetic process"/>
    <property type="evidence" value="ECO:0007669"/>
    <property type="project" value="UniProtKB-UniRule"/>
</dbReference>
<dbReference type="CDD" id="cd13944">
    <property type="entry name" value="lytB_ispH"/>
    <property type="match status" value="1"/>
</dbReference>
<dbReference type="Gene3D" id="3.40.50.11270">
    <property type="match status" value="1"/>
</dbReference>
<dbReference type="Gene3D" id="3.40.1010.20">
    <property type="entry name" value="4-hydroxy-3-methylbut-2-enyl diphosphate reductase, catalytic domain"/>
    <property type="match status" value="2"/>
</dbReference>
<dbReference type="HAMAP" id="MF_00191">
    <property type="entry name" value="IspH"/>
    <property type="match status" value="1"/>
</dbReference>
<dbReference type="InterPro" id="IPR003451">
    <property type="entry name" value="LytB/IspH"/>
</dbReference>
<dbReference type="NCBIfam" id="TIGR00216">
    <property type="entry name" value="ispH_lytB"/>
    <property type="match status" value="1"/>
</dbReference>
<dbReference type="NCBIfam" id="NF009911">
    <property type="entry name" value="PRK13371.1"/>
    <property type="match status" value="1"/>
</dbReference>
<dbReference type="PANTHER" id="PTHR31619">
    <property type="entry name" value="4-HYDROXY-3-METHYLBUT-2-ENYL DIPHOSPHATE REDUCTASE, CHLOROPLASTIC"/>
    <property type="match status" value="1"/>
</dbReference>
<dbReference type="PANTHER" id="PTHR31619:SF5">
    <property type="entry name" value="4-HYDROXY-3-METHYLBUT-2-ENYL DIPHOSPHATE REDUCTASE, CHLOROPLASTIC"/>
    <property type="match status" value="1"/>
</dbReference>
<dbReference type="Pfam" id="PF02401">
    <property type="entry name" value="LYTB"/>
    <property type="match status" value="1"/>
</dbReference>
<proteinExistence type="inferred from homology"/>
<keyword id="KW-0004">4Fe-4S</keyword>
<keyword id="KW-0408">Iron</keyword>
<keyword id="KW-0411">Iron-sulfur</keyword>
<keyword id="KW-0414">Isoprene biosynthesis</keyword>
<keyword id="KW-0479">Metal-binding</keyword>
<keyword id="KW-0560">Oxidoreductase</keyword>
<comment type="function">
    <text evidence="1">Catalyzes the conversion of 1-hydroxy-2-methyl-2-(E)-butenyl 4-diphosphate (HMBPP) into a mixture of isopentenyl diphosphate (IPP) and dimethylallyl diphosphate (DMAPP). Acts in the terminal step of the DOXP/MEP pathway for isoprenoid precursor biosynthesis.</text>
</comment>
<comment type="catalytic activity">
    <reaction evidence="1">
        <text>isopentenyl diphosphate + 2 oxidized [2Fe-2S]-[ferredoxin] + H2O = (2E)-4-hydroxy-3-methylbut-2-enyl diphosphate + 2 reduced [2Fe-2S]-[ferredoxin] + 2 H(+)</text>
        <dbReference type="Rhea" id="RHEA:24488"/>
        <dbReference type="Rhea" id="RHEA-COMP:10000"/>
        <dbReference type="Rhea" id="RHEA-COMP:10001"/>
        <dbReference type="ChEBI" id="CHEBI:15377"/>
        <dbReference type="ChEBI" id="CHEBI:15378"/>
        <dbReference type="ChEBI" id="CHEBI:33737"/>
        <dbReference type="ChEBI" id="CHEBI:33738"/>
        <dbReference type="ChEBI" id="CHEBI:128753"/>
        <dbReference type="ChEBI" id="CHEBI:128769"/>
        <dbReference type="EC" id="1.17.7.4"/>
    </reaction>
</comment>
<comment type="catalytic activity">
    <reaction evidence="1">
        <text>dimethylallyl diphosphate + 2 oxidized [2Fe-2S]-[ferredoxin] + H2O = (2E)-4-hydroxy-3-methylbut-2-enyl diphosphate + 2 reduced [2Fe-2S]-[ferredoxin] + 2 H(+)</text>
        <dbReference type="Rhea" id="RHEA:24825"/>
        <dbReference type="Rhea" id="RHEA-COMP:10000"/>
        <dbReference type="Rhea" id="RHEA-COMP:10001"/>
        <dbReference type="ChEBI" id="CHEBI:15377"/>
        <dbReference type="ChEBI" id="CHEBI:15378"/>
        <dbReference type="ChEBI" id="CHEBI:33737"/>
        <dbReference type="ChEBI" id="CHEBI:33738"/>
        <dbReference type="ChEBI" id="CHEBI:57623"/>
        <dbReference type="ChEBI" id="CHEBI:128753"/>
        <dbReference type="EC" id="1.17.7.4"/>
    </reaction>
</comment>
<comment type="cofactor">
    <cofactor evidence="1">
        <name>[4Fe-4S] cluster</name>
        <dbReference type="ChEBI" id="CHEBI:49883"/>
    </cofactor>
    <text evidence="1">Binds 1 [4Fe-4S] cluster per subunit.</text>
</comment>
<comment type="pathway">
    <text evidence="1">Isoprenoid biosynthesis; dimethylallyl diphosphate biosynthesis; dimethylallyl diphosphate from (2E)-4-hydroxy-3-methylbutenyl diphosphate: step 1/1.</text>
</comment>
<comment type="pathway">
    <text evidence="1">Isoprenoid biosynthesis; isopentenyl diphosphate biosynthesis via DXP pathway; isopentenyl diphosphate from 1-deoxy-D-xylulose 5-phosphate: step 6/6.</text>
</comment>
<comment type="similarity">
    <text evidence="1">Belongs to the IspH family.</text>
</comment>
<feature type="chain" id="PRO_1000021155" description="4-hydroxy-3-methylbut-2-enyl diphosphate reductase">
    <location>
        <begin position="1"/>
        <end position="398"/>
    </location>
</feature>
<feature type="active site" description="Proton donor" evidence="1">
    <location>
        <position position="187"/>
    </location>
</feature>
<feature type="binding site" evidence="1">
    <location>
        <position position="66"/>
    </location>
    <ligand>
        <name>[4Fe-4S] cluster</name>
        <dbReference type="ChEBI" id="CHEBI:49883"/>
    </ligand>
</feature>
<feature type="binding site" evidence="1">
    <location>
        <position position="96"/>
    </location>
    <ligand>
        <name>(2E)-4-hydroxy-3-methylbut-2-enyl diphosphate</name>
        <dbReference type="ChEBI" id="CHEBI:128753"/>
    </ligand>
</feature>
<feature type="binding site" evidence="1">
    <location>
        <position position="96"/>
    </location>
    <ligand>
        <name>dimethylallyl diphosphate</name>
        <dbReference type="ChEBI" id="CHEBI:57623"/>
    </ligand>
</feature>
<feature type="binding site" evidence="1">
    <location>
        <position position="96"/>
    </location>
    <ligand>
        <name>isopentenyl diphosphate</name>
        <dbReference type="ChEBI" id="CHEBI:128769"/>
    </ligand>
</feature>
<feature type="binding site" evidence="1">
    <location>
        <position position="157"/>
    </location>
    <ligand>
        <name>[4Fe-4S] cluster</name>
        <dbReference type="ChEBI" id="CHEBI:49883"/>
    </ligand>
</feature>
<feature type="binding site" evidence="1">
    <location>
        <position position="185"/>
    </location>
    <ligand>
        <name>(2E)-4-hydroxy-3-methylbut-2-enyl diphosphate</name>
        <dbReference type="ChEBI" id="CHEBI:128753"/>
    </ligand>
</feature>
<feature type="binding site" evidence="1">
    <location>
        <position position="185"/>
    </location>
    <ligand>
        <name>dimethylallyl diphosphate</name>
        <dbReference type="ChEBI" id="CHEBI:57623"/>
    </ligand>
</feature>
<feature type="binding site" evidence="1">
    <location>
        <position position="185"/>
    </location>
    <ligand>
        <name>isopentenyl diphosphate</name>
        <dbReference type="ChEBI" id="CHEBI:128769"/>
    </ligand>
</feature>
<feature type="binding site" evidence="1">
    <location>
        <position position="250"/>
    </location>
    <ligand>
        <name>(2E)-4-hydroxy-3-methylbut-2-enyl diphosphate</name>
        <dbReference type="ChEBI" id="CHEBI:128753"/>
    </ligand>
</feature>
<feature type="binding site" evidence="1">
    <location>
        <position position="288"/>
    </location>
    <ligand>
        <name>[4Fe-4S] cluster</name>
        <dbReference type="ChEBI" id="CHEBI:49883"/>
    </ligand>
</feature>
<feature type="binding site" evidence="1">
    <location>
        <position position="317"/>
    </location>
    <ligand>
        <name>(2E)-4-hydroxy-3-methylbut-2-enyl diphosphate</name>
        <dbReference type="ChEBI" id="CHEBI:128753"/>
    </ligand>
</feature>
<feature type="binding site" evidence="1">
    <location>
        <position position="317"/>
    </location>
    <ligand>
        <name>dimethylallyl diphosphate</name>
        <dbReference type="ChEBI" id="CHEBI:57623"/>
    </ligand>
</feature>
<feature type="binding site" evidence="1">
    <location>
        <position position="317"/>
    </location>
    <ligand>
        <name>isopentenyl diphosphate</name>
        <dbReference type="ChEBI" id="CHEBI:128769"/>
    </ligand>
</feature>
<feature type="binding site" evidence="1">
    <location>
        <position position="318"/>
    </location>
    <ligand>
        <name>(2E)-4-hydroxy-3-methylbut-2-enyl diphosphate</name>
        <dbReference type="ChEBI" id="CHEBI:128753"/>
    </ligand>
</feature>
<feature type="binding site" evidence="1">
    <location>
        <position position="318"/>
    </location>
    <ligand>
        <name>dimethylallyl diphosphate</name>
        <dbReference type="ChEBI" id="CHEBI:57623"/>
    </ligand>
</feature>
<feature type="binding site" evidence="1">
    <location>
        <position position="318"/>
    </location>
    <ligand>
        <name>isopentenyl diphosphate</name>
        <dbReference type="ChEBI" id="CHEBI:128769"/>
    </ligand>
</feature>
<feature type="binding site" evidence="1">
    <location>
        <position position="319"/>
    </location>
    <ligand>
        <name>(2E)-4-hydroxy-3-methylbut-2-enyl diphosphate</name>
        <dbReference type="ChEBI" id="CHEBI:128753"/>
    </ligand>
</feature>
<feature type="binding site" evidence="1">
    <location>
        <position position="319"/>
    </location>
    <ligand>
        <name>dimethylallyl diphosphate</name>
        <dbReference type="ChEBI" id="CHEBI:57623"/>
    </ligand>
</feature>
<feature type="binding site" evidence="1">
    <location>
        <position position="319"/>
    </location>
    <ligand>
        <name>isopentenyl diphosphate</name>
        <dbReference type="ChEBI" id="CHEBI:128769"/>
    </ligand>
</feature>
<feature type="binding site" evidence="1">
    <location>
        <position position="380"/>
    </location>
    <ligand>
        <name>(2E)-4-hydroxy-3-methylbut-2-enyl diphosphate</name>
        <dbReference type="ChEBI" id="CHEBI:128753"/>
    </ligand>
</feature>
<feature type="binding site" evidence="1">
    <location>
        <position position="380"/>
    </location>
    <ligand>
        <name>dimethylallyl diphosphate</name>
        <dbReference type="ChEBI" id="CHEBI:57623"/>
    </ligand>
</feature>
<feature type="binding site" evidence="1">
    <location>
        <position position="380"/>
    </location>
    <ligand>
        <name>isopentenyl diphosphate</name>
        <dbReference type="ChEBI" id="CHEBI:128769"/>
    </ligand>
</feature>
<name>ISPH_PROMS</name>
<reference key="1">
    <citation type="journal article" date="2007" name="PLoS Genet.">
        <title>Patterns and implications of gene gain and loss in the evolution of Prochlorococcus.</title>
        <authorList>
            <person name="Kettler G.C."/>
            <person name="Martiny A.C."/>
            <person name="Huang K."/>
            <person name="Zucker J."/>
            <person name="Coleman M.L."/>
            <person name="Rodrigue S."/>
            <person name="Chen F."/>
            <person name="Lapidus A."/>
            <person name="Ferriera S."/>
            <person name="Johnson J."/>
            <person name="Steglich C."/>
            <person name="Church G.M."/>
            <person name="Richardson P."/>
            <person name="Chisholm S.W."/>
        </authorList>
    </citation>
    <scope>NUCLEOTIDE SEQUENCE [LARGE SCALE GENOMIC DNA]</scope>
    <source>
        <strain>AS9601</strain>
    </source>
</reference>
<protein>
    <recommendedName>
        <fullName evidence="1">4-hydroxy-3-methylbut-2-enyl diphosphate reductase</fullName>
        <shortName evidence="1">HMBPP reductase</shortName>
        <ecNumber evidence="1">1.17.7.4</ecNumber>
    </recommendedName>
</protein>